<accession>P18490</accession>
<accession>O46074</accession>
<accession>Q95TI6</accession>
<accession>Q9W506</accession>
<keyword id="KW-0217">Developmental protein</keyword>
<keyword id="KW-0221">Differentiation</keyword>
<keyword id="KW-0325">Glycoprotein</keyword>
<keyword id="KW-0472">Membrane</keyword>
<keyword id="KW-0524">Neurogenesis</keyword>
<keyword id="KW-1185">Reference proteome</keyword>
<keyword id="KW-0677">Repeat</keyword>
<keyword id="KW-0812">Transmembrane</keyword>
<keyword id="KW-1133">Transmembrane helix</keyword>
<comment type="function">
    <text>Involved in neurogenesis.</text>
</comment>
<comment type="subcellular location">
    <subcellularLocation>
        <location evidence="4">Membrane</location>
        <topology evidence="4">Multi-pass membrane protein</topology>
    </subcellularLocation>
</comment>
<comment type="developmental stage">
    <text evidence="3">Expressed both maternally and zygotically.</text>
</comment>
<comment type="similarity">
    <text evidence="4">Belongs to the pecanex family.</text>
</comment>
<comment type="sequence caution" evidence="4">
    <conflict type="erroneous gene model prediction">
        <sequence resource="EMBL-CDS" id="AAA28747"/>
    </conflict>
</comment>
<comment type="sequence caution" evidence="4">
    <conflict type="erroneous gene model prediction">
        <sequence resource="EMBL-CDS" id="AAA28749"/>
    </conflict>
</comment>
<comment type="sequence caution" evidence="4">
    <conflict type="erroneous initiation">
        <sequence resource="EMBL-CDS" id="AAL13981"/>
    </conflict>
</comment>
<evidence type="ECO:0000255" key="1"/>
<evidence type="ECO:0000256" key="2">
    <source>
        <dbReference type="SAM" id="MobiDB-lite"/>
    </source>
</evidence>
<evidence type="ECO:0000269" key="3">
    <source>
    </source>
</evidence>
<evidence type="ECO:0000305" key="4"/>
<name>PCX_DROME</name>
<reference key="1">
    <citation type="submission" date="1991-10" db="EMBL/GenBank/DDBJ databases">
        <title>Unpublished 5' sequence from pecanex region.</title>
        <authorList>
            <person name="Labonne S.G."/>
        </authorList>
    </citation>
    <scope>NUCLEOTIDE SEQUENCE [GENOMIC DNA]</scope>
    <source>
        <strain>Oregon-R</strain>
    </source>
</reference>
<reference key="2">
    <citation type="journal article" date="2000" name="Science">
        <title>The genome sequence of Drosophila melanogaster.</title>
        <authorList>
            <person name="Adams M.D."/>
            <person name="Celniker S.E."/>
            <person name="Holt R.A."/>
            <person name="Evans C.A."/>
            <person name="Gocayne J.D."/>
            <person name="Amanatides P.G."/>
            <person name="Scherer S.E."/>
            <person name="Li P.W."/>
            <person name="Hoskins R.A."/>
            <person name="Galle R.F."/>
            <person name="George R.A."/>
            <person name="Lewis S.E."/>
            <person name="Richards S."/>
            <person name="Ashburner M."/>
            <person name="Henderson S.N."/>
            <person name="Sutton G.G."/>
            <person name="Wortman J.R."/>
            <person name="Yandell M.D."/>
            <person name="Zhang Q."/>
            <person name="Chen L.X."/>
            <person name="Brandon R.C."/>
            <person name="Rogers Y.-H.C."/>
            <person name="Blazej R.G."/>
            <person name="Champe M."/>
            <person name="Pfeiffer B.D."/>
            <person name="Wan K.H."/>
            <person name="Doyle C."/>
            <person name="Baxter E.G."/>
            <person name="Helt G."/>
            <person name="Nelson C.R."/>
            <person name="Miklos G.L.G."/>
            <person name="Abril J.F."/>
            <person name="Agbayani A."/>
            <person name="An H.-J."/>
            <person name="Andrews-Pfannkoch C."/>
            <person name="Baldwin D."/>
            <person name="Ballew R.M."/>
            <person name="Basu A."/>
            <person name="Baxendale J."/>
            <person name="Bayraktaroglu L."/>
            <person name="Beasley E.M."/>
            <person name="Beeson K.Y."/>
            <person name="Benos P.V."/>
            <person name="Berman B.P."/>
            <person name="Bhandari D."/>
            <person name="Bolshakov S."/>
            <person name="Borkova D."/>
            <person name="Botchan M.R."/>
            <person name="Bouck J."/>
            <person name="Brokstein P."/>
            <person name="Brottier P."/>
            <person name="Burtis K.C."/>
            <person name="Busam D.A."/>
            <person name="Butler H."/>
            <person name="Cadieu E."/>
            <person name="Center A."/>
            <person name="Chandra I."/>
            <person name="Cherry J.M."/>
            <person name="Cawley S."/>
            <person name="Dahlke C."/>
            <person name="Davenport L.B."/>
            <person name="Davies P."/>
            <person name="de Pablos B."/>
            <person name="Delcher A."/>
            <person name="Deng Z."/>
            <person name="Mays A.D."/>
            <person name="Dew I."/>
            <person name="Dietz S.M."/>
            <person name="Dodson K."/>
            <person name="Doup L.E."/>
            <person name="Downes M."/>
            <person name="Dugan-Rocha S."/>
            <person name="Dunkov B.C."/>
            <person name="Dunn P."/>
            <person name="Durbin K.J."/>
            <person name="Evangelista C.C."/>
            <person name="Ferraz C."/>
            <person name="Ferriera S."/>
            <person name="Fleischmann W."/>
            <person name="Fosler C."/>
            <person name="Gabrielian A.E."/>
            <person name="Garg N.S."/>
            <person name="Gelbart W.M."/>
            <person name="Glasser K."/>
            <person name="Glodek A."/>
            <person name="Gong F."/>
            <person name="Gorrell J.H."/>
            <person name="Gu Z."/>
            <person name="Guan P."/>
            <person name="Harris M."/>
            <person name="Harris N.L."/>
            <person name="Harvey D.A."/>
            <person name="Heiman T.J."/>
            <person name="Hernandez J.R."/>
            <person name="Houck J."/>
            <person name="Hostin D."/>
            <person name="Houston K.A."/>
            <person name="Howland T.J."/>
            <person name="Wei M.-H."/>
            <person name="Ibegwam C."/>
            <person name="Jalali M."/>
            <person name="Kalush F."/>
            <person name="Karpen G.H."/>
            <person name="Ke Z."/>
            <person name="Kennison J.A."/>
            <person name="Ketchum K.A."/>
            <person name="Kimmel B.E."/>
            <person name="Kodira C.D."/>
            <person name="Kraft C.L."/>
            <person name="Kravitz S."/>
            <person name="Kulp D."/>
            <person name="Lai Z."/>
            <person name="Lasko P."/>
            <person name="Lei Y."/>
            <person name="Levitsky A.A."/>
            <person name="Li J.H."/>
            <person name="Li Z."/>
            <person name="Liang Y."/>
            <person name="Lin X."/>
            <person name="Liu X."/>
            <person name="Mattei B."/>
            <person name="McIntosh T.C."/>
            <person name="McLeod M.P."/>
            <person name="McPherson D."/>
            <person name="Merkulov G."/>
            <person name="Milshina N.V."/>
            <person name="Mobarry C."/>
            <person name="Morris J."/>
            <person name="Moshrefi A."/>
            <person name="Mount S.M."/>
            <person name="Moy M."/>
            <person name="Murphy B."/>
            <person name="Murphy L."/>
            <person name="Muzny D.M."/>
            <person name="Nelson D.L."/>
            <person name="Nelson D.R."/>
            <person name="Nelson K.A."/>
            <person name="Nixon K."/>
            <person name="Nusskern D.R."/>
            <person name="Pacleb J.M."/>
            <person name="Palazzolo M."/>
            <person name="Pittman G.S."/>
            <person name="Pan S."/>
            <person name="Pollard J."/>
            <person name="Puri V."/>
            <person name="Reese M.G."/>
            <person name="Reinert K."/>
            <person name="Remington K."/>
            <person name="Saunders R.D.C."/>
            <person name="Scheeler F."/>
            <person name="Shen H."/>
            <person name="Shue B.C."/>
            <person name="Siden-Kiamos I."/>
            <person name="Simpson M."/>
            <person name="Skupski M.P."/>
            <person name="Smith T.J."/>
            <person name="Spier E."/>
            <person name="Spradling A.C."/>
            <person name="Stapleton M."/>
            <person name="Strong R."/>
            <person name="Sun E."/>
            <person name="Svirskas R."/>
            <person name="Tector C."/>
            <person name="Turner R."/>
            <person name="Venter E."/>
            <person name="Wang A.H."/>
            <person name="Wang X."/>
            <person name="Wang Z.-Y."/>
            <person name="Wassarman D.A."/>
            <person name="Weinstock G.M."/>
            <person name="Weissenbach J."/>
            <person name="Williams S.M."/>
            <person name="Woodage T."/>
            <person name="Worley K.C."/>
            <person name="Wu D."/>
            <person name="Yang S."/>
            <person name="Yao Q.A."/>
            <person name="Ye J."/>
            <person name="Yeh R.-F."/>
            <person name="Zaveri J.S."/>
            <person name="Zhan M."/>
            <person name="Zhang G."/>
            <person name="Zhao Q."/>
            <person name="Zheng L."/>
            <person name="Zheng X.H."/>
            <person name="Zhong F.N."/>
            <person name="Zhong W."/>
            <person name="Zhou X."/>
            <person name="Zhu S.C."/>
            <person name="Zhu X."/>
            <person name="Smith H.O."/>
            <person name="Gibbs R.A."/>
            <person name="Myers E.W."/>
            <person name="Rubin G.M."/>
            <person name="Venter J.C."/>
        </authorList>
    </citation>
    <scope>NUCLEOTIDE SEQUENCE [LARGE SCALE GENOMIC DNA]</scope>
    <source>
        <strain>Berkeley</strain>
    </source>
</reference>
<reference key="3">
    <citation type="journal article" date="2002" name="Genome Biol.">
        <title>Annotation of the Drosophila melanogaster euchromatic genome: a systematic review.</title>
        <authorList>
            <person name="Misra S."/>
            <person name="Crosby M.A."/>
            <person name="Mungall C.J."/>
            <person name="Matthews B.B."/>
            <person name="Campbell K.S."/>
            <person name="Hradecky P."/>
            <person name="Huang Y."/>
            <person name="Kaminker J.S."/>
            <person name="Millburn G.H."/>
            <person name="Prochnik S.E."/>
            <person name="Smith C.D."/>
            <person name="Tupy J.L."/>
            <person name="Whitfield E.J."/>
            <person name="Bayraktaroglu L."/>
            <person name="Berman B.P."/>
            <person name="Bettencourt B.R."/>
            <person name="Celniker S.E."/>
            <person name="de Grey A.D.N.J."/>
            <person name="Drysdale R.A."/>
            <person name="Harris N.L."/>
            <person name="Richter J."/>
            <person name="Russo S."/>
            <person name="Schroeder A.J."/>
            <person name="Shu S.Q."/>
            <person name="Stapleton M."/>
            <person name="Yamada C."/>
            <person name="Ashburner M."/>
            <person name="Gelbart W.M."/>
            <person name="Rubin G.M."/>
            <person name="Lewis S.E."/>
        </authorList>
    </citation>
    <scope>GENOME REANNOTATION</scope>
    <source>
        <strain>Berkeley</strain>
    </source>
</reference>
<reference key="4">
    <citation type="journal article" date="2000" name="Science">
        <title>From sequence to chromosome: the tip of the X chromosome of D. melanogaster.</title>
        <authorList>
            <person name="Benos P.V."/>
            <person name="Gatt M.K."/>
            <person name="Ashburner M."/>
            <person name="Murphy L."/>
            <person name="Harris D."/>
            <person name="Barrell B.G."/>
            <person name="Ferraz C."/>
            <person name="Vidal S."/>
            <person name="Brun C."/>
            <person name="Demailles J."/>
            <person name="Cadieu E."/>
            <person name="Dreano S."/>
            <person name="Gloux S."/>
            <person name="Lelaure V."/>
            <person name="Mottier S."/>
            <person name="Galibert F."/>
            <person name="Borkova D."/>
            <person name="Minana B."/>
            <person name="Kafatos F.C."/>
            <person name="Louis C."/>
            <person name="Siden-Kiamos I."/>
            <person name="Bolshakov S."/>
            <person name="Papagiannakis G."/>
            <person name="Spanos L."/>
            <person name="Cox S."/>
            <person name="Madueno E."/>
            <person name="de Pablos B."/>
            <person name="Modolell J."/>
            <person name="Peter A."/>
            <person name="Schoettler P."/>
            <person name="Werner M."/>
            <person name="Mourkioti F."/>
            <person name="Beinert N."/>
            <person name="Dowe G."/>
            <person name="Schaefer U."/>
            <person name="Jaeckle H."/>
            <person name="Bucheton A."/>
            <person name="Callister D.M."/>
            <person name="Campbell L.A."/>
            <person name="Darlamitsou A."/>
            <person name="Henderson N.S."/>
            <person name="McMillan P.J."/>
            <person name="Salles C."/>
            <person name="Tait E.A."/>
            <person name="Valenti P."/>
            <person name="Saunders R.D.C."/>
            <person name="Glover D.M."/>
        </authorList>
    </citation>
    <scope>NUCLEOTIDE SEQUENCE [LARGE SCALE GENOMIC DNA]</scope>
    <source>
        <strain>Oregon-R</strain>
    </source>
</reference>
<reference key="5">
    <citation type="journal article" date="1989" name="Dev. Biol.">
        <title>Molecular genetics of pecanex, a maternal-effect neurogenic locus of Drosophila melanogaster that potentially encodes a large transmembrane protein.</title>
        <authorList>
            <person name="Labonne S.G."/>
            <person name="Sunitha I."/>
            <person name="Mahowald A.P."/>
        </authorList>
    </citation>
    <scope>NUCLEOTIDE SEQUENCE [GENOMIC DNA] OF 1015-3413</scope>
    <scope>DEVELOPMENTAL STAGE</scope>
    <source>
        <strain>Oregon-R</strain>
    </source>
</reference>
<reference key="6">
    <citation type="journal article" date="2002" name="Genome Biol.">
        <title>A Drosophila full-length cDNA resource.</title>
        <authorList>
            <person name="Stapleton M."/>
            <person name="Carlson J.W."/>
            <person name="Brokstein P."/>
            <person name="Yu C."/>
            <person name="Champe M."/>
            <person name="George R.A."/>
            <person name="Guarin H."/>
            <person name="Kronmiller B."/>
            <person name="Pacleb J.M."/>
            <person name="Park S."/>
            <person name="Wan K.H."/>
            <person name="Rubin G.M."/>
            <person name="Celniker S.E."/>
        </authorList>
    </citation>
    <scope>NUCLEOTIDE SEQUENCE [LARGE SCALE MRNA] OF 2873-3413</scope>
    <source>
        <strain>Berkeley</strain>
        <tissue>Embryo</tissue>
    </source>
</reference>
<sequence length="3413" mass="365325">MGSQTLEILRQGVWASLTGGYFYDPHQGVFCNVVHLYLWLYLLCSPFVAYLYFPSTWLTWCLYCVITSLTILMVKLANLALHRLYDRAQTMSEGNLKGQFVKVTKETEPRHDDEGGIEMKVIRPGGSRISGEQAINEASEENSIMSIDNVNSIIDLKVDVHRKNSSESIELMFYAPSMLSGGSQQDQQSLAGSASVSKSIRSTGPGGNSSTSAAAQADMFNKYLTVYPEVVEAAGSSAGSADGGSSGGDSRSGAAVSTLGHTGAGTAPAQHVRTGHLSRKCSEVFSRRHRRRLERQSSLDTAAAAANSNAENKLMRNQSDTIATAAPSFLHSQPTNKARGQTNPRQHFITSAPSTGIGGGDAPTSSTAVVVIAPASNSLVNPGRSSRLQRHRSSETHDERLKHQSRGGLFQPILQLPHHSAASSIGALAVLGGGGNVAANDVEDMELGLVRNAGSGGVADACSRALQSWILDPFPDGYLEDDSYTKSDLGIEQPHQPTFRTQHRHHHHHHHLHHHLGGAIIRKDPTSTMSALQLAAVTQPGTGGSVTGGGGAAGGGGSAAGMKRRRHSNATSYKHGSSQSNKSSLVGGGGSRGPSGEAGTSGGAGGTGGVRRIKSAALEVLCPQPSVSNLSPHPNSVEAISGQQQMRNPLPPPSKSLVRNQHLNLYPTQGYGDGTPSAGGGGPGNSSTCSSLFFGSSSACGSTTALIEPPVYPIVEHSDEKTAHEEHGDDCLGIGQGNADDDDEVDDVPIRRRTRALGCSQTHYSVESDVGGFLADEVGADEDVFKDFDDNLEHILSELQQTHNQLDDVLKTHDLHHHSHLHHHKAASVEGAGPSGGSVAVGVSAGNDDEDEETEDNNTGSRSPLLNDRNRQPATLREIQADKQLRQELSHQSGAVIPAPNPPVPIRSEADSGCPSSDCEQVSASSKDQLLSGIELELQQYQILQRCQLDEEQPCTSKMAAKSLGAIPKVVKYREVDELRRRRRGGSPADAAEAGNEFALVKQTKQASRNSSSSNSTHSISLTDSLTADIHKMLWLMHGGAVDDRGRPITGTSADGTPIPASSSLVPPNMSNAHFQFYQDAIQALQGTHPTSGSSVEHMTNIELARDKLRLDAKLMCEQLVAAAEANSGVRGNTLATQQMTQQQVGMLMRGGSSSRHPSSAPFSVQGLINVIRSERPAARSQLDALQQLSDAAAALAANASEAASVSASGAGGGASSGGGGVLSALGLANHPSNQISQISQLSQMSQPMLNVDGHFAPYCDYWRPACLLSATEKPAAPKSFYKYRFKWCGQEHEFKIAMDRLELLALFDRDLHWMHVLLASLLCTLVACLGAAILQHDHYKDLCALLFCAVIAGAQYSLVKSVQPDAASPVHGFNKTVAYSRAIYFCLAGGMLLLLKRLDTDYGERTPDPVVFFGMRYSPADVVALLLQALYILLLCFPIIFSVGLCPQINTFLMYLLEQIDMHVFGGNAASSLLGSFLCVVRSVLAVMLLYGPLYGALDEQRGTQYILFSIFCAMLVPLGYHLSRCASDFSHLWRLIKTCIVSTYRDDEDEDLSQMQHIATGTVTGSGTANSTALQLTTSTPKQHRQTDVKTEHEQIELSSLEKLTVNEEHHEKDHGADDQLETDQDLPLQQKHSKSKTSSLGSSQQTLGKTISSSKRAITASSSCTSIGTGEPAVEAGALTEEAVEGEEQRRNTLAGEVGSKHELAENYDQAAKIDECEDKISSSSATNPGDMSTLTAGAGTATTDATPACLEADPDAEAEAPADEKQHQGILGTGTGTGTGTTEASENGSGGGANGNTNSNGTGNDLPDPLPRKLQATVTTRLKNDLVVMTLLAVSVLGLHCSTVFTALQPDLNVVLYSFIGVLGLLLHYIVPQMRKHMPWLCFSRPLLRQREFGQFEVLNAPKIMWFEKLYIYLSVLERNVLFPLLAISSLTADSQLIVAKFGLPWGTLIVAICALKFVRNAYSDPTNQYLIIIFTVLLFRIDFAMATETFIIDYFFVSLAFRKCCDFLLKLQFIVTYIAPWQITWGSAFHAFAQPFSVPHSAMLFLQAAISAVLSTPLNPFLGSAIFLTSYVRPIKFWERDYNTRRIDHSNTRLSSQLERDLGADDNNLNSIFYEHLTRSLQHSLCGDLLMGRWGNVNQGDCFVLASDDLNCLVHIIELGNGLCTFQMRGLEFRGTYCQQREVEAITEDVEDNDGCCCCDPGHLPQLLSANAMFSTRWLAWQVVAAQYVIEGYSISDNLASATLQVFEYRKVLITYYIKSIIYYVVKNPKLEQWLASGPIQDALQHTLSRQFVDLDPIFNFNLDEDFDFRAVGITRSSFCYVYLKWINYCVDMRRDANSMGGAPPAQAPAAAGGASSAPATAGVAPPAPVTPAHNDSKSTPNLSAHGGQAGPSSGQSKSQSQQQLRRPQKSVAQETSVGGGGVVVGGTTVPGTGGVTGGGGDPQLSSSHSFANISRQTSESAPGLGGYVAYMDQNVFVKLAKSSTTTGAGAGAPTSRKESQEKPALRLKLASVGKDAPLVSLCLALGLLARRSLATASHSALTGVEFFLHGLHALFKGDFRITSPRDEWVFADMELLHSVVAPAVKMALKLQQDHITNPDEFLDPHALYDAIDNCSNELVISHEADPVWRSAVLRGAPNLLALRHVMEDGSDEYRIIRLTKRCLSFRVIKLNRECVRGLWAGQQQELIYLRNRNPERGSIQNAKQALRNIINSSCDQPIGYPIYVSPLTTSYADTNAQLCEVIGGAITLDTIRHTVLGWWHRIRERCRQGCSSGSALEPHPGSGPVQLGACNFGSGGSVVGAASTATGVGASTGSGLGVAAPGTAGSTGGESGDLAPVFISAPLYNTLTVNSYYSVRPGNVPGGPIPGNLGGNYVSDSLAVVRGGLAVMPVKPTSTTLIAGLLNRERDETSGSGIMGAGASGPTRATSSGGVRSRRPEVGSSRGRDHERRATLPIASGGAGGEPGKDLTAPQTQVEHEPSPRSTKLSSSSGSLGLGMGVGLGNIITTPGDYPRKTKGPICLTAVDTGTSSSAAEGKPAGSGTVAGTGVGGVIRKPRIEIFKKVIIVDDTGIYDCLDIIDAVVWPTERMRNNGGRLSWKDWEPSAGMVGHVVHCWTPNHKDIRFRSHVNRYVYLVEIGDHYVPVEELGLREYNQIMGSTEEMANSRRSSIQRDFHEYNIQLKLAGLAPIIGGGESSTATTSDASKSHKAKIRAVSSSSSEDEDTSSTRSIPLPQGDDGDLTNFTRLVSMWKEIILDNNKRRLYDMGELSPELLQKLDDAVQQQQQLEDALAEESKEKGTATVTANEGEEGVGEMEIEPEQEQKEVVYLEEQSPLEEVTVSKPDEQPAQPTIPASPVPAETSSTSSAKSTSSPSLCQEEEDAVDPEETPELASEESPSDENGESEAGTTV</sequence>
<organism>
    <name type="scientific">Drosophila melanogaster</name>
    <name type="common">Fruit fly</name>
    <dbReference type="NCBI Taxonomy" id="7227"/>
    <lineage>
        <taxon>Eukaryota</taxon>
        <taxon>Metazoa</taxon>
        <taxon>Ecdysozoa</taxon>
        <taxon>Arthropoda</taxon>
        <taxon>Hexapoda</taxon>
        <taxon>Insecta</taxon>
        <taxon>Pterygota</taxon>
        <taxon>Neoptera</taxon>
        <taxon>Endopterygota</taxon>
        <taxon>Diptera</taxon>
        <taxon>Brachycera</taxon>
        <taxon>Muscomorpha</taxon>
        <taxon>Ephydroidea</taxon>
        <taxon>Drosophilidae</taxon>
        <taxon>Drosophila</taxon>
        <taxon>Sophophora</taxon>
    </lineage>
</organism>
<proteinExistence type="evidence at transcript level"/>
<feature type="chain" id="PRO_0000215792" description="Protein pecanex">
    <location>
        <begin position="1"/>
        <end position="3413"/>
    </location>
</feature>
<feature type="transmembrane region" description="Helical" evidence="1">
    <location>
        <begin position="33"/>
        <end position="53"/>
    </location>
</feature>
<feature type="transmembrane region" description="Helical" evidence="1">
    <location>
        <begin position="57"/>
        <end position="77"/>
    </location>
</feature>
<feature type="transmembrane region" description="Helical" evidence="1">
    <location>
        <begin position="1315"/>
        <end position="1335"/>
    </location>
</feature>
<feature type="transmembrane region" description="Helical" evidence="1">
    <location>
        <begin position="1343"/>
        <end position="1363"/>
    </location>
</feature>
<feature type="transmembrane region" description="Helical" evidence="1">
    <location>
        <begin position="1376"/>
        <end position="1396"/>
    </location>
</feature>
<feature type="transmembrane region" description="Helical" evidence="1">
    <location>
        <begin position="1423"/>
        <end position="1443"/>
    </location>
</feature>
<feature type="transmembrane region" description="Helical" evidence="1">
    <location>
        <begin position="1474"/>
        <end position="1494"/>
    </location>
</feature>
<feature type="transmembrane region" description="Helical" evidence="1">
    <location>
        <begin position="1504"/>
        <end position="1524"/>
    </location>
</feature>
<feature type="transmembrane region" description="Helical" evidence="1">
    <location>
        <begin position="1830"/>
        <end position="1850"/>
    </location>
</feature>
<feature type="transmembrane region" description="Helical" evidence="1">
    <location>
        <begin position="1856"/>
        <end position="1876"/>
    </location>
</feature>
<feature type="transmembrane region" description="Helical" evidence="1">
    <location>
        <begin position="1914"/>
        <end position="1934"/>
    </location>
</feature>
<feature type="transmembrane region" description="Helical" evidence="1">
    <location>
        <begin position="1940"/>
        <end position="1960"/>
    </location>
</feature>
<feature type="transmembrane region" description="Helical" evidence="1">
    <location>
        <begin position="1976"/>
        <end position="1996"/>
    </location>
</feature>
<feature type="repeat" description="1">
    <location>
        <begin position="1776"/>
        <end position="1777"/>
    </location>
</feature>
<feature type="repeat" description="2">
    <location>
        <begin position="1778"/>
        <end position="1779"/>
    </location>
</feature>
<feature type="repeat" description="3">
    <location>
        <begin position="1780"/>
        <end position="1781"/>
    </location>
</feature>
<feature type="repeat" description="4">
    <location>
        <begin position="1782"/>
        <end position="1783"/>
    </location>
</feature>
<feature type="repeat" description="5">
    <location>
        <begin position="1784"/>
        <end position="1785"/>
    </location>
</feature>
<feature type="region of interest" description="Disordered" evidence="2">
    <location>
        <begin position="182"/>
        <end position="213"/>
    </location>
</feature>
<feature type="region of interest" description="Disordered" evidence="2">
    <location>
        <begin position="235"/>
        <end position="314"/>
    </location>
</feature>
<feature type="region of interest" description="Disordered" evidence="2">
    <location>
        <begin position="327"/>
        <end position="363"/>
    </location>
</feature>
<feature type="region of interest" description="Disordered" evidence="2">
    <location>
        <begin position="379"/>
        <end position="403"/>
    </location>
</feature>
<feature type="region of interest" description="Disordered" evidence="2">
    <location>
        <begin position="540"/>
        <end position="609"/>
    </location>
</feature>
<feature type="region of interest" description="Disordered" evidence="2">
    <location>
        <begin position="625"/>
        <end position="651"/>
    </location>
</feature>
<feature type="region of interest" description="Disordered" evidence="2">
    <location>
        <begin position="720"/>
        <end position="745"/>
    </location>
</feature>
<feature type="region of interest" description="Disordered" evidence="2">
    <location>
        <begin position="816"/>
        <end position="873"/>
    </location>
</feature>
<feature type="region of interest" description="Disordered" evidence="2">
    <location>
        <begin position="886"/>
        <end position="921"/>
    </location>
</feature>
<feature type="region of interest" description="Disordered" evidence="2">
    <location>
        <begin position="1002"/>
        <end position="1021"/>
    </location>
</feature>
<feature type="region of interest" description="Disordered" evidence="2">
    <location>
        <begin position="1577"/>
        <end position="1675"/>
    </location>
</feature>
<feature type="region of interest" description="Disordered" evidence="2">
    <location>
        <begin position="1722"/>
        <end position="1744"/>
    </location>
</feature>
<feature type="region of interest" description="Disordered" evidence="2">
    <location>
        <begin position="1760"/>
        <end position="1813"/>
    </location>
</feature>
<feature type="region of interest" description="5 X 2 AA tandem repeats of G-T">
    <location>
        <begin position="1776"/>
        <end position="1785"/>
    </location>
</feature>
<feature type="region of interest" description="Disordered" evidence="2">
    <location>
        <begin position="2344"/>
        <end position="2463"/>
    </location>
</feature>
<feature type="region of interest" description="Disordered" evidence="2">
    <location>
        <begin position="2908"/>
        <end position="2997"/>
    </location>
</feature>
<feature type="region of interest" description="Disordered" evidence="2">
    <location>
        <begin position="3198"/>
        <end position="3242"/>
    </location>
</feature>
<feature type="region of interest" description="Disordered" evidence="2">
    <location>
        <begin position="3295"/>
        <end position="3413"/>
    </location>
</feature>
<feature type="compositionally biased region" description="Low complexity" evidence="2">
    <location>
        <begin position="182"/>
        <end position="195"/>
    </location>
</feature>
<feature type="compositionally biased region" description="Polar residues" evidence="2">
    <location>
        <begin position="196"/>
        <end position="213"/>
    </location>
</feature>
<feature type="compositionally biased region" description="Low complexity" evidence="2">
    <location>
        <begin position="302"/>
        <end position="312"/>
    </location>
</feature>
<feature type="compositionally biased region" description="Polar residues" evidence="2">
    <location>
        <begin position="330"/>
        <end position="354"/>
    </location>
</feature>
<feature type="compositionally biased region" description="Basic and acidic residues" evidence="2">
    <location>
        <begin position="392"/>
        <end position="402"/>
    </location>
</feature>
<feature type="compositionally biased region" description="Gly residues" evidence="2">
    <location>
        <begin position="541"/>
        <end position="559"/>
    </location>
</feature>
<feature type="compositionally biased region" description="Polar residues" evidence="2">
    <location>
        <begin position="569"/>
        <end position="582"/>
    </location>
</feature>
<feature type="compositionally biased region" description="Gly residues" evidence="2">
    <location>
        <begin position="599"/>
        <end position="609"/>
    </location>
</feature>
<feature type="compositionally biased region" description="Polar residues" evidence="2">
    <location>
        <begin position="625"/>
        <end position="634"/>
    </location>
</feature>
<feature type="compositionally biased region" description="Basic and acidic residues" evidence="2">
    <location>
        <begin position="720"/>
        <end position="730"/>
    </location>
</feature>
<feature type="compositionally biased region" description="Basic residues" evidence="2">
    <location>
        <begin position="816"/>
        <end position="826"/>
    </location>
</feature>
<feature type="compositionally biased region" description="Low complexity" evidence="2">
    <location>
        <begin position="828"/>
        <end position="846"/>
    </location>
</feature>
<feature type="compositionally biased region" description="Acidic residues" evidence="2">
    <location>
        <begin position="847"/>
        <end position="856"/>
    </location>
</feature>
<feature type="compositionally biased region" description="Low complexity" evidence="2">
    <location>
        <begin position="1008"/>
        <end position="1021"/>
    </location>
</feature>
<feature type="compositionally biased region" description="Basic and acidic residues" evidence="2">
    <location>
        <begin position="1587"/>
        <end position="1598"/>
    </location>
</feature>
<feature type="compositionally biased region" description="Basic and acidic residues" evidence="2">
    <location>
        <begin position="1607"/>
        <end position="1620"/>
    </location>
</feature>
<feature type="compositionally biased region" description="Low complexity" evidence="2">
    <location>
        <begin position="1639"/>
        <end position="1666"/>
    </location>
</feature>
<feature type="compositionally biased region" description="Polar residues" evidence="2">
    <location>
        <begin position="1725"/>
        <end position="1738"/>
    </location>
</feature>
<feature type="compositionally biased region" description="Low complexity" evidence="2">
    <location>
        <begin position="1799"/>
        <end position="1808"/>
    </location>
</feature>
<feature type="compositionally biased region" description="Low complexity" evidence="2">
    <location>
        <begin position="2346"/>
        <end position="2370"/>
    </location>
</feature>
<feature type="compositionally biased region" description="Low complexity" evidence="2">
    <location>
        <begin position="2389"/>
        <end position="2411"/>
    </location>
</feature>
<feature type="compositionally biased region" description="Gly residues" evidence="2">
    <location>
        <begin position="2437"/>
        <end position="2447"/>
    </location>
</feature>
<feature type="compositionally biased region" description="Polar residues" evidence="2">
    <location>
        <begin position="2449"/>
        <end position="2463"/>
    </location>
</feature>
<feature type="compositionally biased region" description="Basic and acidic residues" evidence="2">
    <location>
        <begin position="2940"/>
        <end position="2956"/>
    </location>
</feature>
<feature type="compositionally biased region" description="Acidic residues" evidence="2">
    <location>
        <begin position="3310"/>
        <end position="3323"/>
    </location>
</feature>
<feature type="compositionally biased region" description="Low complexity" evidence="2">
    <location>
        <begin position="3364"/>
        <end position="3377"/>
    </location>
</feature>
<feature type="compositionally biased region" description="Acidic residues" evidence="2">
    <location>
        <begin position="3380"/>
        <end position="3406"/>
    </location>
</feature>
<feature type="glycosylation site" description="N-linked (GlcNAc...) asparagine" evidence="1">
    <location>
        <position position="164"/>
    </location>
</feature>
<feature type="glycosylation site" description="N-linked (GlcNAc...) asparagine" evidence="1">
    <location>
        <position position="208"/>
    </location>
</feature>
<feature type="glycosylation site" description="N-linked (GlcNAc...) asparagine" evidence="1">
    <location>
        <position position="317"/>
    </location>
</feature>
<feature type="glycosylation site" description="N-linked (GlcNAc...) asparagine" evidence="1">
    <location>
        <position position="569"/>
    </location>
</feature>
<feature type="glycosylation site" description="N-linked (GlcNAc...) asparagine" evidence="1">
    <location>
        <position position="581"/>
    </location>
</feature>
<feature type="glycosylation site" description="N-linked (GlcNAc...) asparagine" evidence="1">
    <location>
        <position position="685"/>
    </location>
</feature>
<feature type="glycosylation site" description="N-linked (GlcNAc...) asparagine" evidence="1">
    <location>
        <position position="857"/>
    </location>
</feature>
<feature type="glycosylation site" description="N-linked (GlcNAc...) asparagine" evidence="1">
    <location>
        <position position="1010"/>
    </location>
</feature>
<feature type="glycosylation site" description="N-linked (GlcNAc...) asparagine" evidence="1">
    <location>
        <position position="1015"/>
    </location>
</feature>
<feature type="glycosylation site" description="N-linked (GlcNAc...) asparagine" evidence="1">
    <location>
        <position position="1069"/>
    </location>
</feature>
<feature type="glycosylation site" description="N-linked (GlcNAc...) asparagine" evidence="1">
    <location>
        <position position="1199"/>
    </location>
</feature>
<feature type="glycosylation site" description="N-linked (GlcNAc...) asparagine" evidence="1">
    <location>
        <position position="1375"/>
    </location>
</feature>
<feature type="glycosylation site" description="N-linked (GlcNAc...) asparagine" evidence="1">
    <location>
        <position position="1572"/>
    </location>
</feature>
<feature type="glycosylation site" description="N-linked (GlcNAc...) asparagine" evidence="1">
    <location>
        <position position="1791"/>
    </location>
</feature>
<feature type="glycosylation site" description="N-linked (GlcNAc...) asparagine" evidence="1">
    <location>
        <position position="1804"/>
    </location>
</feature>
<feature type="glycosylation site" description="N-linked (GlcNAc...) asparagine" evidence="1">
    <location>
        <position position="2380"/>
    </location>
</feature>
<feature type="glycosylation site" description="N-linked (GlcNAc...) asparagine" evidence="1">
    <location>
        <position position="2387"/>
    </location>
</feature>
<feature type="glycosylation site" description="N-linked (GlcNAc...) asparagine" evidence="1">
    <location>
        <position position="2458"/>
    </location>
</feature>
<feature type="glycosylation site" description="N-linked (GlcNAc...) asparagine" evidence="1">
    <location>
        <position position="2619"/>
    </location>
</feature>
<feature type="glycosylation site" description="N-linked (GlcNAc...) asparagine" evidence="1">
    <location>
        <position position="2717"/>
    </location>
</feature>
<feature type="glycosylation site" description="N-linked (GlcNAc...) asparagine" evidence="1">
    <location>
        <position position="3246"/>
    </location>
</feature>
<feature type="sequence conflict" description="In Ref. 1 and 4." evidence="4" ref="1 4">
    <original>G</original>
    <variation>V</variation>
    <location>
        <position position="131"/>
    </location>
</feature>
<feature type="sequence conflict" description="In Ref. 1." evidence="4" ref="1">
    <original>T</original>
    <variation>I</variation>
    <location>
        <position position="211"/>
    </location>
</feature>
<feature type="sequence conflict" description="In Ref. 1." evidence="4" ref="1">
    <original>R</original>
    <variation>C</variation>
    <location>
        <position position="384"/>
    </location>
</feature>
<feature type="sequence conflict" description="In Ref. 1." evidence="4" ref="1">
    <original>A</original>
    <variation>G</variation>
    <location>
        <position position="439"/>
    </location>
</feature>
<feature type="sequence conflict" description="In Ref. 1." evidence="4" ref="1">
    <original>L</original>
    <variation>Q</variation>
    <location>
        <position position="449"/>
    </location>
</feature>
<feature type="sequence conflict" description="In Ref. 1." evidence="4" ref="1">
    <original>L</original>
    <variation>LL</variation>
    <location>
        <position position="471"/>
    </location>
</feature>
<feature type="sequence conflict" description="In Ref. 1; AAA28747." evidence="4" ref="1">
    <original>V</original>
    <variation>D</variation>
    <location>
        <position position="778"/>
    </location>
</feature>
<feature type="sequence conflict" description="In Ref. 5." evidence="4" ref="5">
    <location>
        <position position="1017"/>
    </location>
</feature>
<feature type="sequence conflict" description="In Ref. 1; AAA28747." evidence="4" ref="1">
    <location>
        <position position="1042"/>
    </location>
</feature>
<feature type="sequence conflict" description="In Ref. 1 and 5." evidence="4" ref="1 5">
    <original>Q</original>
    <variation>L</variation>
    <location>
        <position position="1364"/>
    </location>
</feature>
<feature type="sequence conflict" description="In Ref. 1 and 5." evidence="4" ref="1 5">
    <original>A</original>
    <variation>R</variation>
    <location>
        <position position="1368"/>
    </location>
</feature>
<feature type="sequence conflict" description="In Ref. 1 and 5." evidence="4" ref="1 5">
    <original>T</original>
    <variation>A</variation>
    <location>
        <position position="1683"/>
    </location>
</feature>
<feature type="sequence conflict" description="In Ref. 1 and 5." evidence="4" ref="1 5">
    <original>G</original>
    <variation>R</variation>
    <location>
        <position position="1799"/>
    </location>
</feature>
<feature type="sequence conflict" description="In Ref. 1 and 5." evidence="4" ref="1 5">
    <original>S</original>
    <variation>C</variation>
    <location>
        <position position="2543"/>
    </location>
</feature>
<feature type="sequence conflict" description="In Ref. 6." evidence="4" ref="6">
    <original>V</original>
    <variation>M</variation>
    <location>
        <position position="3048"/>
    </location>
</feature>
<feature type="sequence conflict" description="In Ref. 6." evidence="4" ref="6">
    <original>V</original>
    <variation>G</variation>
    <location>
        <position position="3053"/>
    </location>
</feature>
<feature type="sequence conflict" description="In Ref. 1 and 5." evidence="4" ref="1 5">
    <original>MV</original>
    <variation>NG</variation>
    <location>
        <begin position="3111"/>
        <end position="3112"/>
    </location>
</feature>
<feature type="sequence conflict" description="In Ref. 1 and 5." evidence="4" ref="1 5">
    <original>T</original>
    <variation>P</variation>
    <location>
        <position position="3120"/>
    </location>
</feature>
<feature type="sequence conflict" description="In Ref. 1 and 5." evidence="4" ref="1 5">
    <original>T</original>
    <variation>A</variation>
    <location>
        <position position="3231"/>
    </location>
</feature>
<feature type="sequence conflict" description="In Ref. 1 and 5." evidence="4" ref="1 5">
    <original>D</original>
    <variation>G</variation>
    <location>
        <position position="3347"/>
    </location>
</feature>
<dbReference type="EMBL" id="M74329">
    <property type="protein sequence ID" value="AAA28747.1"/>
    <property type="status" value="ALT_SEQ"/>
    <property type="molecule type" value="Genomic_DNA"/>
</dbReference>
<dbReference type="EMBL" id="AE014298">
    <property type="protein sequence ID" value="AAF45756.3"/>
    <property type="molecule type" value="Genomic_DNA"/>
</dbReference>
<dbReference type="EMBL" id="AL009195">
    <property type="protein sequence ID" value="CAA15708.1"/>
    <property type="molecule type" value="Genomic_DNA"/>
</dbReference>
<dbReference type="EMBL" id="M25662">
    <property type="protein sequence ID" value="AAA28749.1"/>
    <property type="status" value="ALT_SEQ"/>
    <property type="molecule type" value="Genomic_DNA"/>
</dbReference>
<dbReference type="EMBL" id="AY058752">
    <property type="protein sequence ID" value="AAL13981.1"/>
    <property type="status" value="ALT_INIT"/>
    <property type="molecule type" value="mRNA"/>
</dbReference>
<dbReference type="PIR" id="A37361">
    <property type="entry name" value="A37361"/>
</dbReference>
<dbReference type="PIR" id="T13423">
    <property type="entry name" value="T13423"/>
</dbReference>
<dbReference type="RefSeq" id="NP_001259182.1">
    <property type="nucleotide sequence ID" value="NM_001272253.1"/>
</dbReference>
<dbReference type="RefSeq" id="NP_525045.3">
    <property type="nucleotide sequence ID" value="NM_080306.4"/>
</dbReference>
<dbReference type="BioGRID" id="57742">
    <property type="interactions" value="7"/>
</dbReference>
<dbReference type="FunCoup" id="P18490">
    <property type="interactions" value="1108"/>
</dbReference>
<dbReference type="IntAct" id="P18490">
    <property type="interactions" value="5"/>
</dbReference>
<dbReference type="STRING" id="7227.FBpp0309618"/>
<dbReference type="GlyCosmos" id="P18490">
    <property type="glycosylation" value="21 sites, No reported glycans"/>
</dbReference>
<dbReference type="GlyGen" id="P18490">
    <property type="glycosylation" value="24 sites"/>
</dbReference>
<dbReference type="PaxDb" id="7227-FBpp0304656"/>
<dbReference type="EnsemblMetazoa" id="FBtr0332381">
    <property type="protein sequence ID" value="FBpp0304655"/>
    <property type="gene ID" value="FBgn0003048"/>
</dbReference>
<dbReference type="EnsemblMetazoa" id="FBtr0344153">
    <property type="protein sequence ID" value="FBpp0310566"/>
    <property type="gene ID" value="FBgn0003048"/>
</dbReference>
<dbReference type="GeneID" id="31204"/>
<dbReference type="KEGG" id="dme:Dmel_CG3443"/>
<dbReference type="UCSC" id="CG3443-RB">
    <property type="organism name" value="d. melanogaster"/>
</dbReference>
<dbReference type="AGR" id="FB:FBgn0003048"/>
<dbReference type="CTD" id="18563"/>
<dbReference type="FlyBase" id="FBgn0003048">
    <property type="gene designation" value="pcx"/>
</dbReference>
<dbReference type="VEuPathDB" id="VectorBase:FBgn0003048"/>
<dbReference type="eggNOG" id="KOG3604">
    <property type="taxonomic scope" value="Eukaryota"/>
</dbReference>
<dbReference type="GeneTree" id="ENSGT00940000168683"/>
<dbReference type="InParanoid" id="P18490"/>
<dbReference type="OrthoDB" id="10037631at2759"/>
<dbReference type="PhylomeDB" id="P18490"/>
<dbReference type="SignaLink" id="P18490"/>
<dbReference type="BioGRID-ORCS" id="31204">
    <property type="hits" value="0 hits in 3 CRISPR screens"/>
</dbReference>
<dbReference type="GenomeRNAi" id="31204"/>
<dbReference type="PRO" id="PR:P18490"/>
<dbReference type="Proteomes" id="UP000000803">
    <property type="component" value="Chromosome X"/>
</dbReference>
<dbReference type="Bgee" id="FBgn0003048">
    <property type="expression patterns" value="Expressed in adult midgut enterocyte in digestive tract and 160 other cell types or tissues"/>
</dbReference>
<dbReference type="ExpressionAtlas" id="P18490">
    <property type="expression patterns" value="baseline and differential"/>
</dbReference>
<dbReference type="GO" id="GO:0005783">
    <property type="term" value="C:endoplasmic reticulum"/>
    <property type="evidence" value="ECO:0000314"/>
    <property type="project" value="FlyBase"/>
</dbReference>
<dbReference type="GO" id="GO:0016020">
    <property type="term" value="C:membrane"/>
    <property type="evidence" value="ECO:0007669"/>
    <property type="project" value="UniProtKB-SubCell"/>
</dbReference>
<dbReference type="GO" id="GO:0030154">
    <property type="term" value="P:cell differentiation"/>
    <property type="evidence" value="ECO:0007669"/>
    <property type="project" value="UniProtKB-KW"/>
</dbReference>
<dbReference type="GO" id="GO:0007029">
    <property type="term" value="P:endoplasmic reticulum organization"/>
    <property type="evidence" value="ECO:0000315"/>
    <property type="project" value="FlyBase"/>
</dbReference>
<dbReference type="GO" id="GO:0007399">
    <property type="term" value="P:nervous system development"/>
    <property type="evidence" value="ECO:0007669"/>
    <property type="project" value="UniProtKB-KW"/>
</dbReference>
<dbReference type="InterPro" id="IPR039797">
    <property type="entry name" value="Pecanex"/>
</dbReference>
<dbReference type="InterPro" id="IPR007735">
    <property type="entry name" value="Pecanex_C"/>
</dbReference>
<dbReference type="PANTHER" id="PTHR12372">
    <property type="entry name" value="PECANEX"/>
    <property type="match status" value="1"/>
</dbReference>
<dbReference type="PANTHER" id="PTHR12372:SF7">
    <property type="entry name" value="PROTEIN PECANEX"/>
    <property type="match status" value="1"/>
</dbReference>
<dbReference type="Pfam" id="PF05041">
    <property type="entry name" value="Pecanex_C"/>
    <property type="match status" value="1"/>
</dbReference>
<protein>
    <recommendedName>
        <fullName>Protein pecanex</fullName>
    </recommendedName>
</protein>
<gene>
    <name type="primary">pcx</name>
    <name type="ORF">CG3443</name>
</gene>